<name>TRHO_ARTS2</name>
<comment type="function">
    <text evidence="1">Catalyzes oxygen-dependent 5-hydroxyuridine (ho5U) modification at position 34 in tRNAs.</text>
</comment>
<comment type="catalytic activity">
    <reaction evidence="1">
        <text>uridine(34) in tRNA + AH2 + O2 = 5-hydroxyuridine(34) in tRNA + A + H2O</text>
        <dbReference type="Rhea" id="RHEA:64224"/>
        <dbReference type="Rhea" id="RHEA-COMP:11727"/>
        <dbReference type="Rhea" id="RHEA-COMP:13381"/>
        <dbReference type="ChEBI" id="CHEBI:13193"/>
        <dbReference type="ChEBI" id="CHEBI:15377"/>
        <dbReference type="ChEBI" id="CHEBI:15379"/>
        <dbReference type="ChEBI" id="CHEBI:17499"/>
        <dbReference type="ChEBI" id="CHEBI:65315"/>
        <dbReference type="ChEBI" id="CHEBI:136877"/>
    </reaction>
</comment>
<comment type="similarity">
    <text evidence="1">Belongs to the TrhO family.</text>
</comment>
<evidence type="ECO:0000255" key="1">
    <source>
        <dbReference type="HAMAP-Rule" id="MF_00469"/>
    </source>
</evidence>
<organism>
    <name type="scientific">Arthrobacter sp. (strain FB24)</name>
    <dbReference type="NCBI Taxonomy" id="290399"/>
    <lineage>
        <taxon>Bacteria</taxon>
        <taxon>Bacillati</taxon>
        <taxon>Actinomycetota</taxon>
        <taxon>Actinomycetes</taxon>
        <taxon>Micrococcales</taxon>
        <taxon>Micrococcaceae</taxon>
        <taxon>Arthrobacter</taxon>
    </lineage>
</organism>
<dbReference type="EC" id="1.14.-.-" evidence="1"/>
<dbReference type="EMBL" id="CP000454">
    <property type="protein sequence ID" value="ABK04740.1"/>
    <property type="molecule type" value="Genomic_DNA"/>
</dbReference>
<dbReference type="RefSeq" id="WP_011693190.1">
    <property type="nucleotide sequence ID" value="NC_008541.1"/>
</dbReference>
<dbReference type="SMR" id="A0K0C0"/>
<dbReference type="STRING" id="290399.Arth_3365"/>
<dbReference type="KEGG" id="art:Arth_3365"/>
<dbReference type="eggNOG" id="COG1054">
    <property type="taxonomic scope" value="Bacteria"/>
</dbReference>
<dbReference type="HOGENOM" id="CLU_038878_1_0_11"/>
<dbReference type="OrthoDB" id="9778326at2"/>
<dbReference type="Proteomes" id="UP000000754">
    <property type="component" value="Chromosome"/>
</dbReference>
<dbReference type="GO" id="GO:0016705">
    <property type="term" value="F:oxidoreductase activity, acting on paired donors, with incorporation or reduction of molecular oxygen"/>
    <property type="evidence" value="ECO:0007669"/>
    <property type="project" value="UniProtKB-UniRule"/>
</dbReference>
<dbReference type="GO" id="GO:0006400">
    <property type="term" value="P:tRNA modification"/>
    <property type="evidence" value="ECO:0007669"/>
    <property type="project" value="UniProtKB-UniRule"/>
</dbReference>
<dbReference type="CDD" id="cd01518">
    <property type="entry name" value="RHOD_YceA"/>
    <property type="match status" value="1"/>
</dbReference>
<dbReference type="Gene3D" id="3.30.70.100">
    <property type="match status" value="1"/>
</dbReference>
<dbReference type="Gene3D" id="3.40.250.10">
    <property type="entry name" value="Rhodanese-like domain"/>
    <property type="match status" value="1"/>
</dbReference>
<dbReference type="HAMAP" id="MF_00469">
    <property type="entry name" value="TrhO"/>
    <property type="match status" value="1"/>
</dbReference>
<dbReference type="InterPro" id="IPR001763">
    <property type="entry name" value="Rhodanese-like_dom"/>
</dbReference>
<dbReference type="InterPro" id="IPR036873">
    <property type="entry name" value="Rhodanese-like_dom_sf"/>
</dbReference>
<dbReference type="InterPro" id="IPR022111">
    <property type="entry name" value="Rhodanese_C"/>
</dbReference>
<dbReference type="InterPro" id="IPR020936">
    <property type="entry name" value="TrhO"/>
</dbReference>
<dbReference type="InterPro" id="IPR040503">
    <property type="entry name" value="TRHO_N"/>
</dbReference>
<dbReference type="NCBIfam" id="NF001134">
    <property type="entry name" value="PRK00142.1-2"/>
    <property type="match status" value="1"/>
</dbReference>
<dbReference type="PANTHER" id="PTHR43268">
    <property type="entry name" value="THIOSULFATE SULFURTRANSFERASE/RHODANESE-LIKE DOMAIN-CONTAINING PROTEIN 2"/>
    <property type="match status" value="1"/>
</dbReference>
<dbReference type="PANTHER" id="PTHR43268:SF6">
    <property type="entry name" value="THIOSULFATE SULFURTRANSFERASE_RHODANESE-LIKE DOMAIN-CONTAINING PROTEIN 2"/>
    <property type="match status" value="1"/>
</dbReference>
<dbReference type="Pfam" id="PF00581">
    <property type="entry name" value="Rhodanese"/>
    <property type="match status" value="1"/>
</dbReference>
<dbReference type="Pfam" id="PF12368">
    <property type="entry name" value="Rhodanese_C"/>
    <property type="match status" value="1"/>
</dbReference>
<dbReference type="Pfam" id="PF17773">
    <property type="entry name" value="UPF0176_N"/>
    <property type="match status" value="1"/>
</dbReference>
<dbReference type="SMART" id="SM00450">
    <property type="entry name" value="RHOD"/>
    <property type="match status" value="1"/>
</dbReference>
<dbReference type="SUPFAM" id="SSF52821">
    <property type="entry name" value="Rhodanese/Cell cycle control phosphatase"/>
    <property type="match status" value="1"/>
</dbReference>
<dbReference type="PROSITE" id="PS50206">
    <property type="entry name" value="RHODANESE_3"/>
    <property type="match status" value="1"/>
</dbReference>
<sequence>MALNRIVLFYGFTPITDPDAVRLWQRALCEKLGLTGRILISKDGINATVGGELNAVKQYVKTTREYKGFHGIDVKWSDGGAEDFPRLSVKVRDEIVSFGAPGELKVDANGVVGGGTHLKPEELHRLVDAKKERGEEVVFFDGRNAFEAQIGKFKDAIVPDVATTHDFIKELESGKYDALKDKPVVTYCTGGIRCEVLSSLMVNRGFKEVYQLDGGIVRYGETFKDQGLWEGSLYVFDKRMHLEFSDEAKTIGECVRCSAPTSKFENCSNPSCRTLTLYCTECASSPETLRCPEGCAA</sequence>
<feature type="chain" id="PRO_1000200336" description="tRNA uridine(34) hydroxylase">
    <location>
        <begin position="1"/>
        <end position="297"/>
    </location>
</feature>
<feature type="domain" description="Rhodanese" evidence="1">
    <location>
        <begin position="133"/>
        <end position="228"/>
    </location>
</feature>
<feature type="active site" description="Cysteine persulfide intermediate" evidence="1">
    <location>
        <position position="188"/>
    </location>
</feature>
<protein>
    <recommendedName>
        <fullName evidence="1">tRNA uridine(34) hydroxylase</fullName>
        <ecNumber evidence="1">1.14.-.-</ecNumber>
    </recommendedName>
    <alternativeName>
        <fullName evidence="1">tRNA hydroxylation protein O</fullName>
    </alternativeName>
</protein>
<accession>A0K0C0</accession>
<gene>
    <name evidence="1" type="primary">trhO</name>
    <name type="ordered locus">Arth_3365</name>
</gene>
<reference key="1">
    <citation type="journal article" date="2013" name="Stand. Genomic Sci.">
        <title>Complete genome sequence of Arthrobacter sp. strain FB24.</title>
        <authorList>
            <person name="Nakatsu C.H."/>
            <person name="Barabote R."/>
            <person name="Thompson S."/>
            <person name="Bruce D."/>
            <person name="Detter C."/>
            <person name="Brettin T."/>
            <person name="Han C."/>
            <person name="Beasley F."/>
            <person name="Chen W."/>
            <person name="Konopka A."/>
            <person name="Xie G."/>
        </authorList>
    </citation>
    <scope>NUCLEOTIDE SEQUENCE [LARGE SCALE GENOMIC DNA]</scope>
    <source>
        <strain>FB24</strain>
    </source>
</reference>
<proteinExistence type="inferred from homology"/>
<keyword id="KW-0560">Oxidoreductase</keyword>
<keyword id="KW-1185">Reference proteome</keyword>
<keyword id="KW-0819">tRNA processing</keyword>